<accession>Q835H3</accession>
<dbReference type="EC" id="3.1.-.-" evidence="1"/>
<dbReference type="EC" id="3.6.4.-" evidence="1"/>
<dbReference type="EMBL" id="AE016830">
    <property type="protein sequence ID" value="AAO81195.1"/>
    <property type="molecule type" value="Genomic_DNA"/>
</dbReference>
<dbReference type="RefSeq" id="NP_815125.1">
    <property type="nucleotide sequence ID" value="NC_004668.1"/>
</dbReference>
<dbReference type="RefSeq" id="WP_002382291.1">
    <property type="nucleotide sequence ID" value="NZ_KE136528.1"/>
</dbReference>
<dbReference type="SMR" id="Q835H3"/>
<dbReference type="STRING" id="226185.EF_1404"/>
<dbReference type="DNASU" id="1200304"/>
<dbReference type="EnsemblBacteria" id="AAO81195">
    <property type="protein sequence ID" value="AAO81195"/>
    <property type="gene ID" value="EF_1404"/>
</dbReference>
<dbReference type="KEGG" id="efa:EF1404"/>
<dbReference type="PATRIC" id="fig|226185.45.peg.2097"/>
<dbReference type="eggNOG" id="COG1193">
    <property type="taxonomic scope" value="Bacteria"/>
</dbReference>
<dbReference type="HOGENOM" id="CLU_011252_2_1_9"/>
<dbReference type="Proteomes" id="UP000001415">
    <property type="component" value="Chromosome"/>
</dbReference>
<dbReference type="GO" id="GO:0005524">
    <property type="term" value="F:ATP binding"/>
    <property type="evidence" value="ECO:0007669"/>
    <property type="project" value="UniProtKB-UniRule"/>
</dbReference>
<dbReference type="GO" id="GO:0016887">
    <property type="term" value="F:ATP hydrolysis activity"/>
    <property type="evidence" value="ECO:0007669"/>
    <property type="project" value="InterPro"/>
</dbReference>
<dbReference type="GO" id="GO:0140664">
    <property type="term" value="F:ATP-dependent DNA damage sensor activity"/>
    <property type="evidence" value="ECO:0007669"/>
    <property type="project" value="InterPro"/>
</dbReference>
<dbReference type="GO" id="GO:0004519">
    <property type="term" value="F:endonuclease activity"/>
    <property type="evidence" value="ECO:0007669"/>
    <property type="project" value="UniProtKB-UniRule"/>
</dbReference>
<dbReference type="GO" id="GO:0030983">
    <property type="term" value="F:mismatched DNA binding"/>
    <property type="evidence" value="ECO:0007669"/>
    <property type="project" value="InterPro"/>
</dbReference>
<dbReference type="GO" id="GO:0043023">
    <property type="term" value="F:ribosomal large subunit binding"/>
    <property type="evidence" value="ECO:0007669"/>
    <property type="project" value="UniProtKB-UniRule"/>
</dbReference>
<dbReference type="GO" id="GO:0019843">
    <property type="term" value="F:rRNA binding"/>
    <property type="evidence" value="ECO:0007669"/>
    <property type="project" value="UniProtKB-UniRule"/>
</dbReference>
<dbReference type="GO" id="GO:0006298">
    <property type="term" value="P:mismatch repair"/>
    <property type="evidence" value="ECO:0007669"/>
    <property type="project" value="InterPro"/>
</dbReference>
<dbReference type="GO" id="GO:0045910">
    <property type="term" value="P:negative regulation of DNA recombination"/>
    <property type="evidence" value="ECO:0007669"/>
    <property type="project" value="InterPro"/>
</dbReference>
<dbReference type="GO" id="GO:0072344">
    <property type="term" value="P:rescue of stalled ribosome"/>
    <property type="evidence" value="ECO:0007669"/>
    <property type="project" value="UniProtKB-UniRule"/>
</dbReference>
<dbReference type="CDD" id="cd03280">
    <property type="entry name" value="ABC_MutS2"/>
    <property type="match status" value="1"/>
</dbReference>
<dbReference type="CDD" id="cd06503">
    <property type="entry name" value="ATP-synt_Fo_b"/>
    <property type="match status" value="1"/>
</dbReference>
<dbReference type="FunFam" id="3.30.1370.110:FF:000004">
    <property type="entry name" value="Endonuclease MutS2"/>
    <property type="match status" value="1"/>
</dbReference>
<dbReference type="FunFam" id="3.40.50.300:FF:000830">
    <property type="entry name" value="Endonuclease MutS2"/>
    <property type="match status" value="1"/>
</dbReference>
<dbReference type="Gene3D" id="3.30.1370.110">
    <property type="match status" value="1"/>
</dbReference>
<dbReference type="Gene3D" id="3.40.50.300">
    <property type="entry name" value="P-loop containing nucleotide triphosphate hydrolases"/>
    <property type="match status" value="1"/>
</dbReference>
<dbReference type="HAMAP" id="MF_00092">
    <property type="entry name" value="MutS2"/>
    <property type="match status" value="1"/>
</dbReference>
<dbReference type="InterPro" id="IPR000432">
    <property type="entry name" value="DNA_mismatch_repair_MutS_C"/>
</dbReference>
<dbReference type="InterPro" id="IPR007696">
    <property type="entry name" value="DNA_mismatch_repair_MutS_core"/>
</dbReference>
<dbReference type="InterPro" id="IPR036187">
    <property type="entry name" value="DNA_mismatch_repair_MutS_sf"/>
</dbReference>
<dbReference type="InterPro" id="IPR046893">
    <property type="entry name" value="MSSS"/>
</dbReference>
<dbReference type="InterPro" id="IPR045076">
    <property type="entry name" value="MutS"/>
</dbReference>
<dbReference type="InterPro" id="IPR005747">
    <property type="entry name" value="MutS2"/>
</dbReference>
<dbReference type="InterPro" id="IPR027417">
    <property type="entry name" value="P-loop_NTPase"/>
</dbReference>
<dbReference type="InterPro" id="IPR002625">
    <property type="entry name" value="Smr_dom"/>
</dbReference>
<dbReference type="InterPro" id="IPR036063">
    <property type="entry name" value="Smr_dom_sf"/>
</dbReference>
<dbReference type="NCBIfam" id="TIGR01069">
    <property type="entry name" value="mutS2"/>
    <property type="match status" value="1"/>
</dbReference>
<dbReference type="PANTHER" id="PTHR48466:SF2">
    <property type="entry name" value="OS10G0509000 PROTEIN"/>
    <property type="match status" value="1"/>
</dbReference>
<dbReference type="PANTHER" id="PTHR48466">
    <property type="entry name" value="OS10G0509000 PROTEIN-RELATED"/>
    <property type="match status" value="1"/>
</dbReference>
<dbReference type="Pfam" id="PF20297">
    <property type="entry name" value="MSSS"/>
    <property type="match status" value="1"/>
</dbReference>
<dbReference type="Pfam" id="PF00488">
    <property type="entry name" value="MutS_V"/>
    <property type="match status" value="1"/>
</dbReference>
<dbReference type="Pfam" id="PF01713">
    <property type="entry name" value="Smr"/>
    <property type="match status" value="1"/>
</dbReference>
<dbReference type="PIRSF" id="PIRSF005814">
    <property type="entry name" value="MutS_YshD"/>
    <property type="match status" value="1"/>
</dbReference>
<dbReference type="SMART" id="SM00534">
    <property type="entry name" value="MUTSac"/>
    <property type="match status" value="1"/>
</dbReference>
<dbReference type="SMART" id="SM00533">
    <property type="entry name" value="MUTSd"/>
    <property type="match status" value="1"/>
</dbReference>
<dbReference type="SMART" id="SM00463">
    <property type="entry name" value="SMR"/>
    <property type="match status" value="1"/>
</dbReference>
<dbReference type="SUPFAM" id="SSF48334">
    <property type="entry name" value="DNA repair protein MutS, domain III"/>
    <property type="match status" value="1"/>
</dbReference>
<dbReference type="SUPFAM" id="SSF52540">
    <property type="entry name" value="P-loop containing nucleoside triphosphate hydrolases"/>
    <property type="match status" value="1"/>
</dbReference>
<dbReference type="SUPFAM" id="SSF160443">
    <property type="entry name" value="SMR domain-like"/>
    <property type="match status" value="1"/>
</dbReference>
<dbReference type="PROSITE" id="PS00486">
    <property type="entry name" value="DNA_MISMATCH_REPAIR_2"/>
    <property type="match status" value="1"/>
</dbReference>
<dbReference type="PROSITE" id="PS50828">
    <property type="entry name" value="SMR"/>
    <property type="match status" value="1"/>
</dbReference>
<evidence type="ECO:0000255" key="1">
    <source>
        <dbReference type="HAMAP-Rule" id="MF_00092"/>
    </source>
</evidence>
<gene>
    <name evidence="1" type="primary">mutS2</name>
    <name evidence="1" type="synonym">rqcU</name>
    <name type="ordered locus">EF_1404</name>
</gene>
<sequence>MNQRILSTLGFDKVKQQLLQFIVTAQGTNEVSELLPIADENKIQSWLNETQDGLKVQRLRGGIPIPKLENIQPHMKRIEIGADLNGIELAQVGRVLSTTSELTRFFDELSENEVDFERLYMWREQLEVLPELNRQLKQAIDDDGYVTDEASPALKAIRQNIRRSEQTIREELDSIIRGKNARYLSDALVTMRNERYVIPVKQEYKNIFGGVVHDQSASGQTLFIEPKQILEMNNRLRQQQIAERNEITRILAELSAELVPYRREITHNAYVIGKLDFINAKARLGKELKAVVPEISQANHVVFKQARHPLLNPEKAVANDIVIGEEYQAIVITGPNTGGKTITLKTLGLLQLMGQAGLPIPVEEESKMGIFTEVFADIGDEQSIEQSLSTFSSHMTNIVSVLKKVDHQSLVLFDELGAGTDPQEGAALAIAILDSLGAKGAYVMATTHYPELKVYGYNRAGTINASMEFDVDTLSPTYRLLIGVPGRSNAFEISKRLGLDNSIIEAAKQIMDGESQDLNEMIEDLENRRKMAETEYLEARHYVDESAALHKELKEAYQVFFEEREKELQKARKEANKIIAEAEENAETIISDIRKMQLESGQQGGVKEHQLIDAKTQLSQLHHEETKLAKNKVLKKAKEQKKLKAGDEVIVNTYGQRGTLLKDNGKGQWQVQLGILKMNVSEEDMTPVAPQKEAKPRVTTVRSAESSHVGTQLDLRGKRYEEALAEVDQYIDAAILAGYPQVTIVHGKGTGALRTGITEFLKNHRSVKSYEFAPQNQGGNGATVVKFQ</sequence>
<comment type="function">
    <text evidence="1">Endonuclease that is involved in the suppression of homologous recombination and thus may have a key role in the control of bacterial genetic diversity.</text>
</comment>
<comment type="function">
    <text evidence="1">Acts as a ribosome collision sensor, splitting the ribosome into its 2 subunits. Detects stalled/collided 70S ribosomes which it binds and splits by an ATP-hydrolysis driven conformational change. Acts upstream of the ribosome quality control system (RQC), a ribosome-associated complex that mediates the extraction of incompletely synthesized nascent chains from stalled ribosomes and their subsequent degradation. Probably generates substrates for RQC.</text>
</comment>
<comment type="subunit">
    <text evidence="1">Homodimer. Binds to stalled ribosomes, contacting rRNA.</text>
</comment>
<comment type="similarity">
    <text evidence="1">Belongs to the DNA mismatch repair MutS family. MutS2 subfamily.</text>
</comment>
<proteinExistence type="inferred from homology"/>
<keyword id="KW-0067">ATP-binding</keyword>
<keyword id="KW-0238">DNA-binding</keyword>
<keyword id="KW-0255">Endonuclease</keyword>
<keyword id="KW-0378">Hydrolase</keyword>
<keyword id="KW-0540">Nuclease</keyword>
<keyword id="KW-0547">Nucleotide-binding</keyword>
<keyword id="KW-1185">Reference proteome</keyword>
<keyword id="KW-0694">RNA-binding</keyword>
<keyword id="KW-0699">rRNA-binding</keyword>
<feature type="chain" id="PRO_1000075475" description="Endonuclease MutS2">
    <location>
        <begin position="1"/>
        <end position="788"/>
    </location>
</feature>
<feature type="domain" description="Smr" evidence="1">
    <location>
        <begin position="713"/>
        <end position="788"/>
    </location>
</feature>
<feature type="binding site" evidence="1">
    <location>
        <begin position="334"/>
        <end position="341"/>
    </location>
    <ligand>
        <name>ATP</name>
        <dbReference type="ChEBI" id="CHEBI:30616"/>
    </ligand>
</feature>
<reference key="1">
    <citation type="journal article" date="2003" name="Science">
        <title>Role of mobile DNA in the evolution of vancomycin-resistant Enterococcus faecalis.</title>
        <authorList>
            <person name="Paulsen I.T."/>
            <person name="Banerjei L."/>
            <person name="Myers G.S.A."/>
            <person name="Nelson K.E."/>
            <person name="Seshadri R."/>
            <person name="Read T.D."/>
            <person name="Fouts D.E."/>
            <person name="Eisen J.A."/>
            <person name="Gill S.R."/>
            <person name="Heidelberg J.F."/>
            <person name="Tettelin H."/>
            <person name="Dodson R.J."/>
            <person name="Umayam L.A."/>
            <person name="Brinkac L.M."/>
            <person name="Beanan M.J."/>
            <person name="Daugherty S.C."/>
            <person name="DeBoy R.T."/>
            <person name="Durkin S.A."/>
            <person name="Kolonay J.F."/>
            <person name="Madupu R."/>
            <person name="Nelson W.C."/>
            <person name="Vamathevan J.J."/>
            <person name="Tran B."/>
            <person name="Upton J."/>
            <person name="Hansen T."/>
            <person name="Shetty J."/>
            <person name="Khouri H.M."/>
            <person name="Utterback T.R."/>
            <person name="Radune D."/>
            <person name="Ketchum K.A."/>
            <person name="Dougherty B.A."/>
            <person name="Fraser C.M."/>
        </authorList>
    </citation>
    <scope>NUCLEOTIDE SEQUENCE [LARGE SCALE GENOMIC DNA]</scope>
    <source>
        <strain>ATCC 700802 / V583</strain>
    </source>
</reference>
<protein>
    <recommendedName>
        <fullName evidence="1">Endonuclease MutS2</fullName>
        <ecNumber evidence="1">3.1.-.-</ecNumber>
    </recommendedName>
    <alternativeName>
        <fullName evidence="1">Ribosome-associated protein quality control-upstream factor</fullName>
        <shortName evidence="1">RQC-upstream factor</shortName>
        <shortName evidence="1">RqcU</shortName>
        <ecNumber evidence="1">3.6.4.-</ecNumber>
    </alternativeName>
</protein>
<organism>
    <name type="scientific">Enterococcus faecalis (strain ATCC 700802 / V583)</name>
    <dbReference type="NCBI Taxonomy" id="226185"/>
    <lineage>
        <taxon>Bacteria</taxon>
        <taxon>Bacillati</taxon>
        <taxon>Bacillota</taxon>
        <taxon>Bacilli</taxon>
        <taxon>Lactobacillales</taxon>
        <taxon>Enterococcaceae</taxon>
        <taxon>Enterococcus</taxon>
    </lineage>
</organism>
<name>MUTS2_ENTFA</name>